<organism>
    <name type="scientific">Escherichia coli (strain K12 / MC4100 / BW2952)</name>
    <dbReference type="NCBI Taxonomy" id="595496"/>
    <lineage>
        <taxon>Bacteria</taxon>
        <taxon>Pseudomonadati</taxon>
        <taxon>Pseudomonadota</taxon>
        <taxon>Gammaproteobacteria</taxon>
        <taxon>Enterobacterales</taxon>
        <taxon>Enterobacteriaceae</taxon>
        <taxon>Escherichia</taxon>
    </lineage>
</organism>
<feature type="chain" id="PRO_1000205557" description="Large ribosomal subunit protein bL12">
    <location>
        <begin position="1"/>
        <end position="121"/>
    </location>
</feature>
<comment type="function">
    <text evidence="1">Forms part of the ribosomal stalk which helps the ribosome interact with GTP-bound translation factors. Is thus essential for accurate translation.</text>
</comment>
<comment type="subunit">
    <text evidence="1">Homodimer. Part of the ribosomal stalk of the 50S ribosomal subunit. Forms a multimeric L10(L12)X complex, where L10 forms an elongated spine to which 2 to 4 L12 dimers bind in a sequential fashion. Binds GTP-bound translation factors.</text>
</comment>
<comment type="similarity">
    <text evidence="1">Belongs to the bacterial ribosomal protein bL12 family.</text>
</comment>
<accession>C5A0S6</accession>
<reference key="1">
    <citation type="journal article" date="2009" name="J. Bacteriol.">
        <title>Genomic sequencing reveals regulatory mutations and recombinational events in the widely used MC4100 lineage of Escherichia coli K-12.</title>
        <authorList>
            <person name="Ferenci T."/>
            <person name="Zhou Z."/>
            <person name="Betteridge T."/>
            <person name="Ren Y."/>
            <person name="Liu Y."/>
            <person name="Feng L."/>
            <person name="Reeves P.R."/>
            <person name="Wang L."/>
        </authorList>
    </citation>
    <scope>NUCLEOTIDE SEQUENCE [LARGE SCALE GENOMIC DNA]</scope>
    <source>
        <strain>K12 / MC4100 / BW2952</strain>
    </source>
</reference>
<keyword id="KW-0687">Ribonucleoprotein</keyword>
<keyword id="KW-0689">Ribosomal protein</keyword>
<protein>
    <recommendedName>
        <fullName evidence="1">Large ribosomal subunit protein bL12</fullName>
    </recommendedName>
    <alternativeName>
        <fullName evidence="2">50S ribosomal protein L7/L12</fullName>
    </alternativeName>
</protein>
<evidence type="ECO:0000255" key="1">
    <source>
        <dbReference type="HAMAP-Rule" id="MF_00368"/>
    </source>
</evidence>
<evidence type="ECO:0000305" key="2"/>
<gene>
    <name evidence="1" type="primary">rplL</name>
    <name type="ordered locus">BWG_3645</name>
</gene>
<proteinExistence type="inferred from homology"/>
<dbReference type="EMBL" id="CP001396">
    <property type="protein sequence ID" value="ACR61877.1"/>
    <property type="molecule type" value="Genomic_DNA"/>
</dbReference>
<dbReference type="RefSeq" id="WP_000028878.1">
    <property type="nucleotide sequence ID" value="NC_012759.1"/>
</dbReference>
<dbReference type="SMR" id="C5A0S6"/>
<dbReference type="GeneID" id="86944525"/>
<dbReference type="KEGG" id="ebw:BWG_3645"/>
<dbReference type="HOGENOM" id="CLU_086499_3_2_6"/>
<dbReference type="GO" id="GO:0022625">
    <property type="term" value="C:cytosolic large ribosomal subunit"/>
    <property type="evidence" value="ECO:0007669"/>
    <property type="project" value="TreeGrafter"/>
</dbReference>
<dbReference type="GO" id="GO:0003729">
    <property type="term" value="F:mRNA binding"/>
    <property type="evidence" value="ECO:0007669"/>
    <property type="project" value="TreeGrafter"/>
</dbReference>
<dbReference type="GO" id="GO:0003735">
    <property type="term" value="F:structural constituent of ribosome"/>
    <property type="evidence" value="ECO:0007669"/>
    <property type="project" value="InterPro"/>
</dbReference>
<dbReference type="GO" id="GO:0006412">
    <property type="term" value="P:translation"/>
    <property type="evidence" value="ECO:0007669"/>
    <property type="project" value="UniProtKB-UniRule"/>
</dbReference>
<dbReference type="CDD" id="cd00387">
    <property type="entry name" value="Ribosomal_L7_L12"/>
    <property type="match status" value="1"/>
</dbReference>
<dbReference type="FunFam" id="1.20.5.710:FF:000001">
    <property type="entry name" value="50S ribosomal protein L7/L12"/>
    <property type="match status" value="1"/>
</dbReference>
<dbReference type="FunFam" id="3.30.1390.10:FF:000001">
    <property type="entry name" value="50S ribosomal protein L7/L12"/>
    <property type="match status" value="1"/>
</dbReference>
<dbReference type="Gene3D" id="3.30.1390.10">
    <property type="match status" value="1"/>
</dbReference>
<dbReference type="Gene3D" id="1.20.5.710">
    <property type="entry name" value="Single helix bin"/>
    <property type="match status" value="1"/>
</dbReference>
<dbReference type="HAMAP" id="MF_00368">
    <property type="entry name" value="Ribosomal_bL12"/>
    <property type="match status" value="1"/>
</dbReference>
<dbReference type="InterPro" id="IPR000206">
    <property type="entry name" value="Ribosomal_bL12"/>
</dbReference>
<dbReference type="InterPro" id="IPR013823">
    <property type="entry name" value="Ribosomal_bL12_C"/>
</dbReference>
<dbReference type="InterPro" id="IPR014719">
    <property type="entry name" value="Ribosomal_bL12_C/ClpS-like"/>
</dbReference>
<dbReference type="InterPro" id="IPR008932">
    <property type="entry name" value="Ribosomal_bL12_oligo"/>
</dbReference>
<dbReference type="InterPro" id="IPR036235">
    <property type="entry name" value="Ribosomal_bL12_oligo_N_sf"/>
</dbReference>
<dbReference type="NCBIfam" id="TIGR00855">
    <property type="entry name" value="L12"/>
    <property type="match status" value="1"/>
</dbReference>
<dbReference type="PANTHER" id="PTHR45987">
    <property type="entry name" value="39S RIBOSOMAL PROTEIN L12"/>
    <property type="match status" value="1"/>
</dbReference>
<dbReference type="PANTHER" id="PTHR45987:SF4">
    <property type="entry name" value="LARGE RIBOSOMAL SUBUNIT PROTEIN BL12M"/>
    <property type="match status" value="1"/>
</dbReference>
<dbReference type="Pfam" id="PF00542">
    <property type="entry name" value="Ribosomal_L12"/>
    <property type="match status" value="1"/>
</dbReference>
<dbReference type="Pfam" id="PF16320">
    <property type="entry name" value="Ribosomal_L12_N"/>
    <property type="match status" value="1"/>
</dbReference>
<dbReference type="SUPFAM" id="SSF54736">
    <property type="entry name" value="ClpS-like"/>
    <property type="match status" value="1"/>
</dbReference>
<dbReference type="SUPFAM" id="SSF48300">
    <property type="entry name" value="Ribosomal protein L7/12, oligomerisation (N-terminal) domain"/>
    <property type="match status" value="1"/>
</dbReference>
<sequence length="121" mass="12295">MSITKDQIIEAVAAMSVMDVVELISAMEEKFGVSAAAAVAVAAGPVEAAEEKTEFDVILKAAGANKVAVIKAVRGATGLGLKEAKDLVESAPAALKEGVSKDDAEALKKALEEAGAEVEVK</sequence>
<name>RL7_ECOBW</name>